<sequence length="338" mass="38346">MANRANRHAARTEDSDNTINYVQCDGLAVMKMVKHCHEESSNMDLAQGALLGLVVDKCLEITNCFPFPKSGDETMDEELYQLTVMRRLRRVNVDHLHVGWYQSSDVGNSLSLALLESQYHYQTSIEESVVVVYDTQKSSRGFLCLKAYRLTPQAIQMYKDGDFTPEAFRTLKVGYESLFAEIPIVIKNSPLTNIMMSELNELLPEDKGHNFLDLGTATVLENQMRSLIERVDELYQEAVRYNKYQQVVFKQDTEKHRALAKLAAENAVRTSKGEPTVPEEEVIKQFRPMTAPNRLTATITSGQINTHAQHIAQFCSQSLAKLFITESLQNAKEAKETK</sequence>
<reference key="1">
    <citation type="journal article" date="2007" name="Nature">
        <title>Evolution of genes and genomes on the Drosophila phylogeny.</title>
        <authorList>
            <consortium name="Drosophila 12 genomes consortium"/>
        </authorList>
    </citation>
    <scope>NUCLEOTIDE SEQUENCE [LARGE SCALE GENOMIC DNA]</scope>
    <source>
        <strain>Tucson 14021-0224.01</strain>
    </source>
</reference>
<evidence type="ECO:0000250" key="1">
    <source>
        <dbReference type="UniProtKB" id="Q9U9Q4"/>
    </source>
</evidence>
<evidence type="ECO:0000255" key="2">
    <source>
        <dbReference type="HAMAP-Rule" id="MF_03007"/>
    </source>
</evidence>
<evidence type="ECO:0000255" key="3">
    <source>
        <dbReference type="PROSITE-ProRule" id="PRU01182"/>
    </source>
</evidence>
<keyword id="KW-0963">Cytoplasm</keyword>
<keyword id="KW-0396">Initiation factor</keyword>
<keyword id="KW-0648">Protein biosynthesis</keyword>
<feature type="chain" id="PRO_0000365186" description="Eukaryotic translation initiation factor 3 subunit H">
    <location>
        <begin position="1"/>
        <end position="338"/>
    </location>
</feature>
<feature type="domain" description="MPN" evidence="3">
    <location>
        <begin position="22"/>
        <end position="154"/>
    </location>
</feature>
<dbReference type="EMBL" id="CH954177">
    <property type="protein sequence ID" value="EDV57821.1"/>
    <property type="molecule type" value="Genomic_DNA"/>
</dbReference>
<dbReference type="SMR" id="B3N4F1"/>
<dbReference type="MEROPS" id="M67.971"/>
<dbReference type="EnsemblMetazoa" id="FBtr0144376">
    <property type="protein sequence ID" value="FBpp0142868"/>
    <property type="gene ID" value="FBgn0116454"/>
</dbReference>
<dbReference type="EnsemblMetazoa" id="XM_001968726.3">
    <property type="protein sequence ID" value="XP_001968762.1"/>
    <property type="gene ID" value="LOC6540592"/>
</dbReference>
<dbReference type="GeneID" id="6540592"/>
<dbReference type="KEGG" id="der:6540592"/>
<dbReference type="CTD" id="8667"/>
<dbReference type="eggNOG" id="KOG1560">
    <property type="taxonomic scope" value="Eukaryota"/>
</dbReference>
<dbReference type="HOGENOM" id="CLU_044094_0_0_1"/>
<dbReference type="OMA" id="WYQSTYF"/>
<dbReference type="OrthoDB" id="10265695at2759"/>
<dbReference type="PhylomeDB" id="B3N4F1"/>
<dbReference type="ChiTaRS" id="eIF-3p40">
    <property type="organism name" value="fly"/>
</dbReference>
<dbReference type="Proteomes" id="UP000008711">
    <property type="component" value="Unassembled WGS sequence"/>
</dbReference>
<dbReference type="GO" id="GO:0016282">
    <property type="term" value="C:eukaryotic 43S preinitiation complex"/>
    <property type="evidence" value="ECO:0007669"/>
    <property type="project" value="UniProtKB-UniRule"/>
</dbReference>
<dbReference type="GO" id="GO:0033290">
    <property type="term" value="C:eukaryotic 48S preinitiation complex"/>
    <property type="evidence" value="ECO:0007669"/>
    <property type="project" value="UniProtKB-UniRule"/>
</dbReference>
<dbReference type="GO" id="GO:0005852">
    <property type="term" value="C:eukaryotic translation initiation factor 3 complex"/>
    <property type="evidence" value="ECO:0007669"/>
    <property type="project" value="UniProtKB-UniRule"/>
</dbReference>
<dbReference type="GO" id="GO:0008237">
    <property type="term" value="F:metallopeptidase activity"/>
    <property type="evidence" value="ECO:0007669"/>
    <property type="project" value="InterPro"/>
</dbReference>
<dbReference type="GO" id="GO:0003743">
    <property type="term" value="F:translation initiation factor activity"/>
    <property type="evidence" value="ECO:0007669"/>
    <property type="project" value="UniProtKB-UniRule"/>
</dbReference>
<dbReference type="GO" id="GO:0001732">
    <property type="term" value="P:formation of cytoplasmic translation initiation complex"/>
    <property type="evidence" value="ECO:0007669"/>
    <property type="project" value="UniProtKB-UniRule"/>
</dbReference>
<dbReference type="GO" id="GO:0045747">
    <property type="term" value="P:positive regulation of Notch signaling pathway"/>
    <property type="evidence" value="ECO:0007669"/>
    <property type="project" value="EnsemblMetazoa"/>
</dbReference>
<dbReference type="CDD" id="cd08065">
    <property type="entry name" value="MPN_eIF3h"/>
    <property type="match status" value="1"/>
</dbReference>
<dbReference type="FunFam" id="3.40.140.10:FF:000045">
    <property type="entry name" value="Eukaryotic translation initiation factor 3 subunit H"/>
    <property type="match status" value="1"/>
</dbReference>
<dbReference type="Gene3D" id="3.40.140.10">
    <property type="entry name" value="Cytidine Deaminase, domain 2"/>
    <property type="match status" value="1"/>
</dbReference>
<dbReference type="HAMAP" id="MF_03007">
    <property type="entry name" value="eIF3h"/>
    <property type="match status" value="1"/>
</dbReference>
<dbReference type="InterPro" id="IPR027524">
    <property type="entry name" value="eIF3h"/>
</dbReference>
<dbReference type="InterPro" id="IPR045810">
    <property type="entry name" value="eIF3h_C"/>
</dbReference>
<dbReference type="InterPro" id="IPR000555">
    <property type="entry name" value="JAMM/MPN+_dom"/>
</dbReference>
<dbReference type="InterPro" id="IPR050242">
    <property type="entry name" value="JAMM_MPN+_peptidase_M67A"/>
</dbReference>
<dbReference type="InterPro" id="IPR037518">
    <property type="entry name" value="MPN"/>
</dbReference>
<dbReference type="PANTHER" id="PTHR10410">
    <property type="entry name" value="EUKARYOTIC TRANSLATION INITIATION FACTOR 3 -RELATED"/>
    <property type="match status" value="1"/>
</dbReference>
<dbReference type="Pfam" id="PF19445">
    <property type="entry name" value="eIF3h_C"/>
    <property type="match status" value="1"/>
</dbReference>
<dbReference type="Pfam" id="PF01398">
    <property type="entry name" value="JAB"/>
    <property type="match status" value="1"/>
</dbReference>
<dbReference type="SMART" id="SM00232">
    <property type="entry name" value="JAB_MPN"/>
    <property type="match status" value="1"/>
</dbReference>
<dbReference type="PROSITE" id="PS50249">
    <property type="entry name" value="MPN"/>
    <property type="match status" value="1"/>
</dbReference>
<name>EIF3H_DROER</name>
<proteinExistence type="inferred from homology"/>
<organism>
    <name type="scientific">Drosophila erecta</name>
    <name type="common">Fruit fly</name>
    <dbReference type="NCBI Taxonomy" id="7220"/>
    <lineage>
        <taxon>Eukaryota</taxon>
        <taxon>Metazoa</taxon>
        <taxon>Ecdysozoa</taxon>
        <taxon>Arthropoda</taxon>
        <taxon>Hexapoda</taxon>
        <taxon>Insecta</taxon>
        <taxon>Pterygota</taxon>
        <taxon>Neoptera</taxon>
        <taxon>Endopterygota</taxon>
        <taxon>Diptera</taxon>
        <taxon>Brachycera</taxon>
        <taxon>Muscomorpha</taxon>
        <taxon>Ephydroidea</taxon>
        <taxon>Drosophilidae</taxon>
        <taxon>Drosophila</taxon>
        <taxon>Sophophora</taxon>
    </lineage>
</organism>
<accession>B3N4F1</accession>
<comment type="function">
    <text evidence="2">Component of the eukaryotic translation initiation factor 3 (eIF-3) complex, which is involved in protein synthesis of a specialized repertoire of mRNAs and, together with other initiation factors, stimulates binding of mRNA and methionyl-tRNAi to the 40S ribosome. The eIF-3 complex specifically targets and initiates translation of a subset of mRNAs involved in cell proliferation.</text>
</comment>
<comment type="subunit">
    <text evidence="1 2">Component of the eukaryotic translation initiation factor 3 (eIF-3) complex. The eIF-3 complex interacts with pix. Interacts with mxt (By similarity).</text>
</comment>
<comment type="subcellular location">
    <subcellularLocation>
        <location evidence="2">Cytoplasm</location>
    </subcellularLocation>
</comment>
<comment type="similarity">
    <text evidence="2">Belongs to the eIF-3 subunit H family.</text>
</comment>
<gene>
    <name evidence="2" type="primary">eIF-3p40</name>
    <name evidence="2" type="synonym">eif3-S3</name>
    <name type="ORF">GG24322</name>
</gene>
<protein>
    <recommendedName>
        <fullName evidence="2">Eukaryotic translation initiation factor 3 subunit H</fullName>
        <shortName evidence="2">eIF3h</shortName>
    </recommendedName>
    <alternativeName>
        <fullName evidence="2">Eukaryotic translation initiation factor 3 subunit 3</fullName>
    </alternativeName>
</protein>